<accession>C1ET27</accession>
<name>RL1_BACC3</name>
<keyword id="KW-0678">Repressor</keyword>
<keyword id="KW-0687">Ribonucleoprotein</keyword>
<keyword id="KW-0689">Ribosomal protein</keyword>
<keyword id="KW-0694">RNA-binding</keyword>
<keyword id="KW-0699">rRNA-binding</keyword>
<keyword id="KW-0810">Translation regulation</keyword>
<keyword id="KW-0820">tRNA-binding</keyword>
<proteinExistence type="inferred from homology"/>
<gene>
    <name evidence="1" type="primary">rplA</name>
    <name type="ordered locus">BCA_0126</name>
</gene>
<sequence length="230" mass="24481">MAKRGKKYVEAAKLVDRAAAYSATEAVELVKKTNTAKFDATVEAAFRLGVDPKKADQQIRGAVVLPHGTGKVQRVLVFAKGEKAKEAEAAGADFVGDADYIGKIQQGWFDFDVVVATPDMMGEVGKLGRVLGPKGLMPNPKTGTVTFDVTKAVNEIKAGKVEYRVDKAGNIHVPIGKVSFEDAKLVENFRTIADTLQKVKPAAAKGTYMKNVTVASTMGPGVRVDVSTLA</sequence>
<reference key="1">
    <citation type="submission" date="2009-02" db="EMBL/GenBank/DDBJ databases">
        <title>Genome sequence of Bacillus cereus 03BB102.</title>
        <authorList>
            <person name="Dodson R.J."/>
            <person name="Jackson P."/>
            <person name="Munk A.C."/>
            <person name="Brettin T."/>
            <person name="Bruce D."/>
            <person name="Detter C."/>
            <person name="Tapia R."/>
            <person name="Han C."/>
            <person name="Sutton G."/>
            <person name="Sims D."/>
        </authorList>
    </citation>
    <scope>NUCLEOTIDE SEQUENCE [LARGE SCALE GENOMIC DNA]</scope>
    <source>
        <strain>03BB102</strain>
    </source>
</reference>
<dbReference type="EMBL" id="CP001407">
    <property type="protein sequence ID" value="ACO29783.1"/>
    <property type="molecule type" value="Genomic_DNA"/>
</dbReference>
<dbReference type="RefSeq" id="WP_002020168.1">
    <property type="nucleotide sequence ID" value="NZ_CP009318.1"/>
</dbReference>
<dbReference type="SMR" id="C1ET27"/>
<dbReference type="GeneID" id="93010955"/>
<dbReference type="KEGG" id="bcx:BCA_0126"/>
<dbReference type="PATRIC" id="fig|572264.18.peg.162"/>
<dbReference type="Proteomes" id="UP000002210">
    <property type="component" value="Chromosome"/>
</dbReference>
<dbReference type="GO" id="GO:0015934">
    <property type="term" value="C:large ribosomal subunit"/>
    <property type="evidence" value="ECO:0007669"/>
    <property type="project" value="InterPro"/>
</dbReference>
<dbReference type="GO" id="GO:0019843">
    <property type="term" value="F:rRNA binding"/>
    <property type="evidence" value="ECO:0007669"/>
    <property type="project" value="UniProtKB-UniRule"/>
</dbReference>
<dbReference type="GO" id="GO:0003735">
    <property type="term" value="F:structural constituent of ribosome"/>
    <property type="evidence" value="ECO:0007669"/>
    <property type="project" value="InterPro"/>
</dbReference>
<dbReference type="GO" id="GO:0000049">
    <property type="term" value="F:tRNA binding"/>
    <property type="evidence" value="ECO:0007669"/>
    <property type="project" value="UniProtKB-KW"/>
</dbReference>
<dbReference type="GO" id="GO:0006417">
    <property type="term" value="P:regulation of translation"/>
    <property type="evidence" value="ECO:0007669"/>
    <property type="project" value="UniProtKB-KW"/>
</dbReference>
<dbReference type="GO" id="GO:0006412">
    <property type="term" value="P:translation"/>
    <property type="evidence" value="ECO:0007669"/>
    <property type="project" value="UniProtKB-UniRule"/>
</dbReference>
<dbReference type="CDD" id="cd00403">
    <property type="entry name" value="Ribosomal_L1"/>
    <property type="match status" value="1"/>
</dbReference>
<dbReference type="FunFam" id="3.40.50.790:FF:000001">
    <property type="entry name" value="50S ribosomal protein L1"/>
    <property type="match status" value="1"/>
</dbReference>
<dbReference type="Gene3D" id="3.30.190.20">
    <property type="match status" value="1"/>
</dbReference>
<dbReference type="Gene3D" id="3.40.50.790">
    <property type="match status" value="1"/>
</dbReference>
<dbReference type="HAMAP" id="MF_01318_B">
    <property type="entry name" value="Ribosomal_uL1_B"/>
    <property type="match status" value="1"/>
</dbReference>
<dbReference type="InterPro" id="IPR005878">
    <property type="entry name" value="Ribosom_uL1_bac-type"/>
</dbReference>
<dbReference type="InterPro" id="IPR002143">
    <property type="entry name" value="Ribosomal_uL1"/>
</dbReference>
<dbReference type="InterPro" id="IPR023674">
    <property type="entry name" value="Ribosomal_uL1-like"/>
</dbReference>
<dbReference type="InterPro" id="IPR028364">
    <property type="entry name" value="Ribosomal_uL1/biogenesis"/>
</dbReference>
<dbReference type="InterPro" id="IPR016095">
    <property type="entry name" value="Ribosomal_uL1_3-a/b-sand"/>
</dbReference>
<dbReference type="InterPro" id="IPR023673">
    <property type="entry name" value="Ribosomal_uL1_CS"/>
</dbReference>
<dbReference type="NCBIfam" id="TIGR01169">
    <property type="entry name" value="rplA_bact"/>
    <property type="match status" value="1"/>
</dbReference>
<dbReference type="PANTHER" id="PTHR36427">
    <property type="entry name" value="54S RIBOSOMAL PROTEIN L1, MITOCHONDRIAL"/>
    <property type="match status" value="1"/>
</dbReference>
<dbReference type="PANTHER" id="PTHR36427:SF3">
    <property type="entry name" value="LARGE RIBOSOMAL SUBUNIT PROTEIN UL1M"/>
    <property type="match status" value="1"/>
</dbReference>
<dbReference type="Pfam" id="PF00687">
    <property type="entry name" value="Ribosomal_L1"/>
    <property type="match status" value="1"/>
</dbReference>
<dbReference type="PIRSF" id="PIRSF002155">
    <property type="entry name" value="Ribosomal_L1"/>
    <property type="match status" value="1"/>
</dbReference>
<dbReference type="SUPFAM" id="SSF56808">
    <property type="entry name" value="Ribosomal protein L1"/>
    <property type="match status" value="1"/>
</dbReference>
<dbReference type="PROSITE" id="PS01199">
    <property type="entry name" value="RIBOSOMAL_L1"/>
    <property type="match status" value="1"/>
</dbReference>
<comment type="function">
    <text evidence="1">Binds directly to 23S rRNA. The L1 stalk is quite mobile in the ribosome, and is involved in E site tRNA release.</text>
</comment>
<comment type="function">
    <text evidence="1">Protein L1 is also a translational repressor protein, it controls the translation of the L11 operon by binding to its mRNA.</text>
</comment>
<comment type="subunit">
    <text evidence="1">Part of the 50S ribosomal subunit.</text>
</comment>
<comment type="similarity">
    <text evidence="1">Belongs to the universal ribosomal protein uL1 family.</text>
</comment>
<protein>
    <recommendedName>
        <fullName evidence="1">Large ribosomal subunit protein uL1</fullName>
    </recommendedName>
    <alternativeName>
        <fullName evidence="2">50S ribosomal protein L1</fullName>
    </alternativeName>
</protein>
<feature type="chain" id="PRO_1000165658" description="Large ribosomal subunit protein uL1">
    <location>
        <begin position="1"/>
        <end position="230"/>
    </location>
</feature>
<evidence type="ECO:0000255" key="1">
    <source>
        <dbReference type="HAMAP-Rule" id="MF_01318"/>
    </source>
</evidence>
<evidence type="ECO:0000305" key="2"/>
<organism>
    <name type="scientific">Bacillus cereus (strain 03BB102)</name>
    <dbReference type="NCBI Taxonomy" id="572264"/>
    <lineage>
        <taxon>Bacteria</taxon>
        <taxon>Bacillati</taxon>
        <taxon>Bacillota</taxon>
        <taxon>Bacilli</taxon>
        <taxon>Bacillales</taxon>
        <taxon>Bacillaceae</taxon>
        <taxon>Bacillus</taxon>
        <taxon>Bacillus cereus group</taxon>
    </lineage>
</organism>